<comment type="function">
    <text evidence="1">May act as a general Rab protein regulator.</text>
</comment>
<comment type="subcellular location">
    <subcellularLocation>
        <location evidence="4">Membrane</location>
        <topology evidence="4">Multi-pass membrane protein</topology>
    </subcellularLocation>
</comment>
<comment type="similarity">
    <text evidence="4">Belongs to the PRA1 family.</text>
</comment>
<evidence type="ECO:0000250" key="1"/>
<evidence type="ECO:0000255" key="2"/>
<evidence type="ECO:0000256" key="3">
    <source>
        <dbReference type="SAM" id="MobiDB-lite"/>
    </source>
</evidence>
<evidence type="ECO:0000305" key="4"/>
<gene>
    <name type="primary">prafA</name>
    <name type="ORF">DDB_G0278887</name>
</gene>
<sequence>MESNSNSNETMYGNPNINMGFVDSGNSNIGNNTGSMSPPPQQQQQPQQASSTPAGSVGIGGLSFSLGANGISLEPSSISHRVNAITSKIKEFKQERMETTRDWRSFVGSRQQYGLPNIKDTTSRIKENVVYFQSNYLILFLCFSVFFIITNPFYLLLLGVLLFISVYLHNSTTLTDIQRKIAYGIQAFLSIYFLLYAGSSIFWLVGATCCITLLHASFHSPNSTDETNIKFGDGV</sequence>
<feature type="chain" id="PRO_0000340240" description="PRA1 family protein 1">
    <location>
        <begin position="1"/>
        <end position="235"/>
    </location>
</feature>
<feature type="transmembrane region" description="Helical" evidence="2">
    <location>
        <begin position="144"/>
        <end position="164"/>
    </location>
</feature>
<feature type="transmembrane region" description="Helical" evidence="2">
    <location>
        <begin position="187"/>
        <end position="207"/>
    </location>
</feature>
<feature type="region of interest" description="Disordered" evidence="3">
    <location>
        <begin position="1"/>
        <end position="55"/>
    </location>
</feature>
<feature type="compositionally biased region" description="Polar residues" evidence="3">
    <location>
        <begin position="1"/>
        <end position="17"/>
    </location>
</feature>
<feature type="compositionally biased region" description="Low complexity" evidence="3">
    <location>
        <begin position="24"/>
        <end position="48"/>
    </location>
</feature>
<proteinExistence type="inferred from homology"/>
<keyword id="KW-0472">Membrane</keyword>
<keyword id="KW-1185">Reference proteome</keyword>
<keyword id="KW-0812">Transmembrane</keyword>
<keyword id="KW-1133">Transmembrane helix</keyword>
<accession>Q54XK1</accession>
<reference key="1">
    <citation type="journal article" date="2005" name="Nature">
        <title>The genome of the social amoeba Dictyostelium discoideum.</title>
        <authorList>
            <person name="Eichinger L."/>
            <person name="Pachebat J.A."/>
            <person name="Gloeckner G."/>
            <person name="Rajandream M.A."/>
            <person name="Sucgang R."/>
            <person name="Berriman M."/>
            <person name="Song J."/>
            <person name="Olsen R."/>
            <person name="Szafranski K."/>
            <person name="Xu Q."/>
            <person name="Tunggal B."/>
            <person name="Kummerfeld S."/>
            <person name="Madera M."/>
            <person name="Konfortov B.A."/>
            <person name="Rivero F."/>
            <person name="Bankier A.T."/>
            <person name="Lehmann R."/>
            <person name="Hamlin N."/>
            <person name="Davies R."/>
            <person name="Gaudet P."/>
            <person name="Fey P."/>
            <person name="Pilcher K."/>
            <person name="Chen G."/>
            <person name="Saunders D."/>
            <person name="Sodergren E.J."/>
            <person name="Davis P."/>
            <person name="Kerhornou A."/>
            <person name="Nie X."/>
            <person name="Hall N."/>
            <person name="Anjard C."/>
            <person name="Hemphill L."/>
            <person name="Bason N."/>
            <person name="Farbrother P."/>
            <person name="Desany B."/>
            <person name="Just E."/>
            <person name="Morio T."/>
            <person name="Rost R."/>
            <person name="Churcher C.M."/>
            <person name="Cooper J."/>
            <person name="Haydock S."/>
            <person name="van Driessche N."/>
            <person name="Cronin A."/>
            <person name="Goodhead I."/>
            <person name="Muzny D.M."/>
            <person name="Mourier T."/>
            <person name="Pain A."/>
            <person name="Lu M."/>
            <person name="Harper D."/>
            <person name="Lindsay R."/>
            <person name="Hauser H."/>
            <person name="James K.D."/>
            <person name="Quiles M."/>
            <person name="Madan Babu M."/>
            <person name="Saito T."/>
            <person name="Buchrieser C."/>
            <person name="Wardroper A."/>
            <person name="Felder M."/>
            <person name="Thangavelu M."/>
            <person name="Johnson D."/>
            <person name="Knights A."/>
            <person name="Loulseged H."/>
            <person name="Mungall K.L."/>
            <person name="Oliver K."/>
            <person name="Price C."/>
            <person name="Quail M.A."/>
            <person name="Urushihara H."/>
            <person name="Hernandez J."/>
            <person name="Rabbinowitsch E."/>
            <person name="Steffen D."/>
            <person name="Sanders M."/>
            <person name="Ma J."/>
            <person name="Kohara Y."/>
            <person name="Sharp S."/>
            <person name="Simmonds M.N."/>
            <person name="Spiegler S."/>
            <person name="Tivey A."/>
            <person name="Sugano S."/>
            <person name="White B."/>
            <person name="Walker D."/>
            <person name="Woodward J.R."/>
            <person name="Winckler T."/>
            <person name="Tanaka Y."/>
            <person name="Shaulsky G."/>
            <person name="Schleicher M."/>
            <person name="Weinstock G.M."/>
            <person name="Rosenthal A."/>
            <person name="Cox E.C."/>
            <person name="Chisholm R.L."/>
            <person name="Gibbs R.A."/>
            <person name="Loomis W.F."/>
            <person name="Platzer M."/>
            <person name="Kay R.R."/>
            <person name="Williams J.G."/>
            <person name="Dear P.H."/>
            <person name="Noegel A.A."/>
            <person name="Barrell B.G."/>
            <person name="Kuspa A."/>
        </authorList>
    </citation>
    <scope>NUCLEOTIDE SEQUENCE [LARGE SCALE GENOMIC DNA]</scope>
    <source>
        <strain>AX4</strain>
    </source>
</reference>
<organism>
    <name type="scientific">Dictyostelium discoideum</name>
    <name type="common">Social amoeba</name>
    <dbReference type="NCBI Taxonomy" id="44689"/>
    <lineage>
        <taxon>Eukaryota</taxon>
        <taxon>Amoebozoa</taxon>
        <taxon>Evosea</taxon>
        <taxon>Eumycetozoa</taxon>
        <taxon>Dictyostelia</taxon>
        <taxon>Dictyosteliales</taxon>
        <taxon>Dictyosteliaceae</taxon>
        <taxon>Dictyostelium</taxon>
    </lineage>
</organism>
<protein>
    <recommendedName>
        <fullName>PRA1 family protein 1</fullName>
    </recommendedName>
</protein>
<dbReference type="EMBL" id="AAFI02000024">
    <property type="protein sequence ID" value="EAL68045.1"/>
    <property type="molecule type" value="Genomic_DNA"/>
</dbReference>
<dbReference type="RefSeq" id="XP_647802.1">
    <property type="nucleotide sequence ID" value="XM_642710.1"/>
</dbReference>
<dbReference type="FunCoup" id="Q54XK1">
    <property type="interactions" value="140"/>
</dbReference>
<dbReference type="STRING" id="44689.Q54XK1"/>
<dbReference type="PaxDb" id="44689-DDB0304559"/>
<dbReference type="EnsemblProtists" id="EAL68045">
    <property type="protein sequence ID" value="EAL68045"/>
    <property type="gene ID" value="DDB_G0278887"/>
</dbReference>
<dbReference type="GeneID" id="8621762"/>
<dbReference type="KEGG" id="ddi:DDB_G0278887"/>
<dbReference type="dictyBase" id="DDB_G0278887">
    <property type="gene designation" value="prafA"/>
</dbReference>
<dbReference type="VEuPathDB" id="AmoebaDB:DDB_G0278887"/>
<dbReference type="eggNOG" id="KOG3142">
    <property type="taxonomic scope" value="Eukaryota"/>
</dbReference>
<dbReference type="HOGENOM" id="CLU_1182018_0_0_1"/>
<dbReference type="InParanoid" id="Q54XK1"/>
<dbReference type="OMA" id="VVYFQSN"/>
<dbReference type="PhylomeDB" id="Q54XK1"/>
<dbReference type="PRO" id="PR:Q54XK1"/>
<dbReference type="Proteomes" id="UP000002195">
    <property type="component" value="Chromosome 3"/>
</dbReference>
<dbReference type="GO" id="GO:0005794">
    <property type="term" value="C:Golgi apparatus"/>
    <property type="evidence" value="ECO:0000318"/>
    <property type="project" value="GO_Central"/>
</dbReference>
<dbReference type="GO" id="GO:0016020">
    <property type="term" value="C:membrane"/>
    <property type="evidence" value="ECO:0007669"/>
    <property type="project" value="UniProtKB-SubCell"/>
</dbReference>
<dbReference type="InterPro" id="IPR004895">
    <property type="entry name" value="Prenylated_rab_accept_PRA1"/>
</dbReference>
<dbReference type="PANTHER" id="PTHR19317">
    <property type="entry name" value="PRENYLATED RAB ACCEPTOR 1-RELATED"/>
    <property type="match status" value="1"/>
</dbReference>
<dbReference type="PANTHER" id="PTHR19317:SF0">
    <property type="entry name" value="PRENYLATED RAB ACCEPTOR PROTEIN 1"/>
    <property type="match status" value="1"/>
</dbReference>
<dbReference type="Pfam" id="PF03208">
    <property type="entry name" value="PRA1"/>
    <property type="match status" value="1"/>
</dbReference>
<name>PRAFA_DICDI</name>